<keyword id="KW-0067">ATP-binding</keyword>
<keyword id="KW-0963">Cytoplasm</keyword>
<keyword id="KW-0436">Ligase</keyword>
<keyword id="KW-0460">Magnesium</keyword>
<keyword id="KW-0479">Metal-binding</keyword>
<keyword id="KW-0547">Nucleotide-binding</keyword>
<keyword id="KW-0658">Purine biosynthesis</keyword>
<keyword id="KW-1185">Reference proteome</keyword>
<reference key="1">
    <citation type="journal article" date="2006" name="BMC Genomics">
        <title>The genome of the square archaeon Haloquadratum walsbyi: life at the limits of water activity.</title>
        <authorList>
            <person name="Bolhuis H."/>
            <person name="Palm P."/>
            <person name="Wende A."/>
            <person name="Falb M."/>
            <person name="Rampp M."/>
            <person name="Rodriguez-Valera F."/>
            <person name="Pfeiffer F."/>
            <person name="Oesterhelt D."/>
        </authorList>
    </citation>
    <scope>NUCLEOTIDE SEQUENCE [LARGE SCALE GENOMIC DNA]</scope>
    <source>
        <strain>DSM 16790 / HBSQ001</strain>
    </source>
</reference>
<name>PURL_HALWD</name>
<gene>
    <name evidence="1" type="primary">purL</name>
    <name type="ordered locus">HQ_1693A</name>
</gene>
<sequence>MTLSDSDLELITTELGRELTPAEAALFENLWSEHCAYRSSRPLLQSFTTGDDSANDEGAEHVVIGPGDDAAVVRLPRVDEASETPIYITMGIESHNHPSYVDPYDGAATGVGGIVRDTLSMGAYPIALADSLYFGSFDRERTQYLLDGVVEGIADYGNAIGVPTVAGSVEFHNKYTGNPLVNVACIGLLTDERLVTAEAQSPGNKLVLVGNATGRDGLGGASFASEDLSEDAETEDRPAVQVGDPYTEKRLIEANEELITAELIQSARDLGAAGLGGASSELVAKGGLGARINLERVHQREPAMNAMEILLAESQERMCYEVHPDDVETVGDIAAKYDLGYAVIGEIRDGNYVCTFGDETVVDVPAGFLADGAPMNDLSATEPPTPEESTFPAIDAATAFNTIISTPNTASKRWIYRQYDHEVGLRTAMRPGDDAALIAIREAGVGLALSSGAVPAWTESNPYKGAQAVALENATNVAAKGATPIAAVDCLNGGNPEKPAVYGAFKDIVQGLADMCHTLSIPVVGGNVSLYNDSTSGPIPPTPTLALVGTKKTFDAPPAALTGDGTLLLVGHQSNNLGGSELLAQIGGTDKFPALPSNPTAVVDSLARVANHPSTLATHDVSTGGLAVTLAELITSDAGARVTVQNKTSLFTETPGRAVIETTDPDAVRHIFEGVAPVVSLGDTTTDGTLTINIDDEDTANESPAVTTDAATVAKQRRILEDALE</sequence>
<evidence type="ECO:0000255" key="1">
    <source>
        <dbReference type="HAMAP-Rule" id="MF_00420"/>
    </source>
</evidence>
<evidence type="ECO:0000256" key="2">
    <source>
        <dbReference type="SAM" id="MobiDB-lite"/>
    </source>
</evidence>
<protein>
    <recommendedName>
        <fullName evidence="1">Phosphoribosylformylglycinamidine synthase subunit PurL</fullName>
        <shortName evidence="1">FGAM synthase</shortName>
        <ecNumber evidence="1">6.3.5.3</ecNumber>
    </recommendedName>
    <alternativeName>
        <fullName evidence="1">Formylglycinamide ribonucleotide amidotransferase subunit II</fullName>
        <shortName evidence="1">FGAR amidotransferase II</shortName>
        <shortName evidence="1">FGAR-AT II</shortName>
    </alternativeName>
    <alternativeName>
        <fullName evidence="1">Glutamine amidotransferase PurL</fullName>
    </alternativeName>
    <alternativeName>
        <fullName evidence="1">Phosphoribosylformylglycinamidine synthase subunit II</fullName>
    </alternativeName>
</protein>
<accession>Q18JI5</accession>
<feature type="chain" id="PRO_1000050310" description="Phosphoribosylformylglycinamidine synthase subunit PurL">
    <location>
        <begin position="1"/>
        <end position="725"/>
    </location>
</feature>
<feature type="region of interest" description="Disordered" evidence="2">
    <location>
        <begin position="220"/>
        <end position="241"/>
    </location>
</feature>
<feature type="active site" evidence="1">
    <location>
        <position position="34"/>
    </location>
</feature>
<feature type="active site" description="Proton acceptor" evidence="1">
    <location>
        <position position="95"/>
    </location>
</feature>
<feature type="binding site" evidence="1">
    <location>
        <position position="37"/>
    </location>
    <ligand>
        <name>ATP</name>
        <dbReference type="ChEBI" id="CHEBI:30616"/>
    </ligand>
</feature>
<feature type="binding site" evidence="1">
    <location>
        <position position="93"/>
    </location>
    <ligand>
        <name>Mg(2+)</name>
        <dbReference type="ChEBI" id="CHEBI:18420"/>
        <label>1</label>
    </ligand>
</feature>
<feature type="binding site" evidence="1">
    <location>
        <begin position="94"/>
        <end position="97"/>
    </location>
    <ligand>
        <name>substrate</name>
    </ligand>
</feature>
<feature type="binding site" evidence="1">
    <location>
        <position position="116"/>
    </location>
    <ligand>
        <name>substrate</name>
    </ligand>
</feature>
<feature type="binding site" evidence="1">
    <location>
        <position position="117"/>
    </location>
    <ligand>
        <name>Mg(2+)</name>
        <dbReference type="ChEBI" id="CHEBI:18420"/>
        <label>2</label>
    </ligand>
</feature>
<feature type="binding site" evidence="1">
    <location>
        <position position="241"/>
    </location>
    <ligand>
        <name>substrate</name>
    </ligand>
</feature>
<feature type="binding site" evidence="1">
    <location>
        <position position="269"/>
    </location>
    <ligand>
        <name>Mg(2+)</name>
        <dbReference type="ChEBI" id="CHEBI:18420"/>
        <label>2</label>
    </ligand>
</feature>
<feature type="binding site" evidence="1">
    <location>
        <begin position="313"/>
        <end position="315"/>
    </location>
    <ligand>
        <name>substrate</name>
    </ligand>
</feature>
<feature type="binding site" evidence="1">
    <location>
        <position position="489"/>
    </location>
    <ligand>
        <name>ATP</name>
        <dbReference type="ChEBI" id="CHEBI:30616"/>
    </ligand>
</feature>
<feature type="binding site" evidence="1">
    <location>
        <position position="526"/>
    </location>
    <ligand>
        <name>ATP</name>
        <dbReference type="ChEBI" id="CHEBI:30616"/>
    </ligand>
</feature>
<feature type="binding site" evidence="1">
    <location>
        <position position="527"/>
    </location>
    <ligand>
        <name>Mg(2+)</name>
        <dbReference type="ChEBI" id="CHEBI:18420"/>
        <label>1</label>
    </ligand>
</feature>
<feature type="binding site" evidence="1">
    <location>
        <position position="529"/>
    </location>
    <ligand>
        <name>substrate</name>
    </ligand>
</feature>
<comment type="function">
    <text evidence="1">Part of the phosphoribosylformylglycinamidine synthase complex involved in the purines biosynthetic pathway. Catalyzes the ATP-dependent conversion of formylglycinamide ribonucleotide (FGAR) and glutamine to yield formylglycinamidine ribonucleotide (FGAM) and glutamate. The FGAM synthase complex is composed of three subunits. PurQ produces an ammonia molecule by converting glutamine to glutamate. PurL transfers the ammonia molecule to FGAR to form FGAM in an ATP-dependent manner. PurS interacts with PurQ and PurL and is thought to assist in the transfer of the ammonia molecule from PurQ to PurL.</text>
</comment>
<comment type="catalytic activity">
    <reaction evidence="1">
        <text>N(2)-formyl-N(1)-(5-phospho-beta-D-ribosyl)glycinamide + L-glutamine + ATP + H2O = 2-formamido-N(1)-(5-O-phospho-beta-D-ribosyl)acetamidine + L-glutamate + ADP + phosphate + H(+)</text>
        <dbReference type="Rhea" id="RHEA:17129"/>
        <dbReference type="ChEBI" id="CHEBI:15377"/>
        <dbReference type="ChEBI" id="CHEBI:15378"/>
        <dbReference type="ChEBI" id="CHEBI:29985"/>
        <dbReference type="ChEBI" id="CHEBI:30616"/>
        <dbReference type="ChEBI" id="CHEBI:43474"/>
        <dbReference type="ChEBI" id="CHEBI:58359"/>
        <dbReference type="ChEBI" id="CHEBI:147286"/>
        <dbReference type="ChEBI" id="CHEBI:147287"/>
        <dbReference type="ChEBI" id="CHEBI:456216"/>
        <dbReference type="EC" id="6.3.5.3"/>
    </reaction>
</comment>
<comment type="pathway">
    <text evidence="1">Purine metabolism; IMP biosynthesis via de novo pathway; 5-amino-1-(5-phospho-D-ribosyl)imidazole from N(2)-formyl-N(1)-(5-phospho-D-ribosyl)glycinamide: step 1/2.</text>
</comment>
<comment type="subunit">
    <text evidence="1">Monomer. Part of the FGAM synthase complex composed of 1 PurL, 1 PurQ and 2 PurS subunits.</text>
</comment>
<comment type="subcellular location">
    <subcellularLocation>
        <location evidence="1">Cytoplasm</location>
    </subcellularLocation>
</comment>
<comment type="similarity">
    <text evidence="1">Belongs to the FGAMS family.</text>
</comment>
<proteinExistence type="inferred from homology"/>
<organism>
    <name type="scientific">Haloquadratum walsbyi (strain DSM 16790 / HBSQ001)</name>
    <dbReference type="NCBI Taxonomy" id="362976"/>
    <lineage>
        <taxon>Archaea</taxon>
        <taxon>Methanobacteriati</taxon>
        <taxon>Methanobacteriota</taxon>
        <taxon>Stenosarchaea group</taxon>
        <taxon>Halobacteria</taxon>
        <taxon>Halobacteriales</taxon>
        <taxon>Haloferacaceae</taxon>
        <taxon>Haloquadratum</taxon>
    </lineage>
</organism>
<dbReference type="EC" id="6.3.5.3" evidence="1"/>
<dbReference type="EMBL" id="AM180088">
    <property type="protein sequence ID" value="CAJ51821.1"/>
    <property type="molecule type" value="Genomic_DNA"/>
</dbReference>
<dbReference type="RefSeq" id="WP_011570971.1">
    <property type="nucleotide sequence ID" value="NC_008212.1"/>
</dbReference>
<dbReference type="SMR" id="Q18JI5"/>
<dbReference type="STRING" id="362976.HQ_1693A"/>
<dbReference type="GeneID" id="4194536"/>
<dbReference type="KEGG" id="hwa:HQ_1693A"/>
<dbReference type="eggNOG" id="arCOG00641">
    <property type="taxonomic scope" value="Archaea"/>
</dbReference>
<dbReference type="HOGENOM" id="CLU_003100_0_1_2"/>
<dbReference type="UniPathway" id="UPA00074">
    <property type="reaction ID" value="UER00128"/>
</dbReference>
<dbReference type="Proteomes" id="UP000001975">
    <property type="component" value="Chromosome"/>
</dbReference>
<dbReference type="GO" id="GO:0005737">
    <property type="term" value="C:cytoplasm"/>
    <property type="evidence" value="ECO:0007669"/>
    <property type="project" value="UniProtKB-SubCell"/>
</dbReference>
<dbReference type="GO" id="GO:0005524">
    <property type="term" value="F:ATP binding"/>
    <property type="evidence" value="ECO:0007669"/>
    <property type="project" value="UniProtKB-UniRule"/>
</dbReference>
<dbReference type="GO" id="GO:0000287">
    <property type="term" value="F:magnesium ion binding"/>
    <property type="evidence" value="ECO:0007669"/>
    <property type="project" value="UniProtKB-UniRule"/>
</dbReference>
<dbReference type="GO" id="GO:0004642">
    <property type="term" value="F:phosphoribosylformylglycinamidine synthase activity"/>
    <property type="evidence" value="ECO:0007669"/>
    <property type="project" value="UniProtKB-UniRule"/>
</dbReference>
<dbReference type="GO" id="GO:0006189">
    <property type="term" value="P:'de novo' IMP biosynthetic process"/>
    <property type="evidence" value="ECO:0007669"/>
    <property type="project" value="UniProtKB-UniRule"/>
</dbReference>
<dbReference type="CDD" id="cd02203">
    <property type="entry name" value="PurL_repeat1"/>
    <property type="match status" value="1"/>
</dbReference>
<dbReference type="CDD" id="cd02204">
    <property type="entry name" value="PurL_repeat2"/>
    <property type="match status" value="1"/>
</dbReference>
<dbReference type="Gene3D" id="3.90.650.10">
    <property type="entry name" value="PurM-like C-terminal domain"/>
    <property type="match status" value="2"/>
</dbReference>
<dbReference type="Gene3D" id="3.30.1330.10">
    <property type="entry name" value="PurM-like, N-terminal domain"/>
    <property type="match status" value="2"/>
</dbReference>
<dbReference type="HAMAP" id="MF_00420">
    <property type="entry name" value="PurL_2"/>
    <property type="match status" value="1"/>
</dbReference>
<dbReference type="InterPro" id="IPR010074">
    <property type="entry name" value="PRibForGlyAmidine_synth_PurL"/>
</dbReference>
<dbReference type="InterPro" id="IPR041609">
    <property type="entry name" value="PurL_linker"/>
</dbReference>
<dbReference type="InterPro" id="IPR010918">
    <property type="entry name" value="PurM-like_C_dom"/>
</dbReference>
<dbReference type="InterPro" id="IPR036676">
    <property type="entry name" value="PurM-like_C_sf"/>
</dbReference>
<dbReference type="InterPro" id="IPR016188">
    <property type="entry name" value="PurM-like_N"/>
</dbReference>
<dbReference type="InterPro" id="IPR036921">
    <property type="entry name" value="PurM-like_N_sf"/>
</dbReference>
<dbReference type="NCBIfam" id="TIGR01736">
    <property type="entry name" value="FGAM_synth_II"/>
    <property type="match status" value="1"/>
</dbReference>
<dbReference type="NCBIfam" id="NF002290">
    <property type="entry name" value="PRK01213.1"/>
    <property type="match status" value="1"/>
</dbReference>
<dbReference type="PANTHER" id="PTHR43555">
    <property type="entry name" value="PHOSPHORIBOSYLFORMYLGLYCINAMIDINE SYNTHASE SUBUNIT PURL"/>
    <property type="match status" value="1"/>
</dbReference>
<dbReference type="PANTHER" id="PTHR43555:SF1">
    <property type="entry name" value="PHOSPHORIBOSYLFORMYLGLYCINAMIDINE SYNTHASE SUBUNIT PURL"/>
    <property type="match status" value="1"/>
</dbReference>
<dbReference type="Pfam" id="PF00586">
    <property type="entry name" value="AIRS"/>
    <property type="match status" value="2"/>
</dbReference>
<dbReference type="Pfam" id="PF02769">
    <property type="entry name" value="AIRS_C"/>
    <property type="match status" value="2"/>
</dbReference>
<dbReference type="Pfam" id="PF18072">
    <property type="entry name" value="FGAR-AT_linker"/>
    <property type="match status" value="1"/>
</dbReference>
<dbReference type="PIRSF" id="PIRSF001587">
    <property type="entry name" value="FGAM_synthase_II"/>
    <property type="match status" value="1"/>
</dbReference>
<dbReference type="SUPFAM" id="SSF56042">
    <property type="entry name" value="PurM C-terminal domain-like"/>
    <property type="match status" value="2"/>
</dbReference>
<dbReference type="SUPFAM" id="SSF55326">
    <property type="entry name" value="PurM N-terminal domain-like"/>
    <property type="match status" value="2"/>
</dbReference>